<name>TRAA_AGRFC</name>
<evidence type="ECO:0000255" key="1"/>
<evidence type="ECO:0000305" key="2"/>
<proteinExistence type="inferred from homology"/>
<gene>
    <name type="primary">traA</name>
    <name type="ordered locus">Atu6127</name>
    <name type="ORF">AGR_pTi_237</name>
</gene>
<protein>
    <recommendedName>
        <fullName>Conjugal transfer protein TraA</fullName>
    </recommendedName>
</protein>
<organism>
    <name type="scientific">Agrobacterium fabrum (strain C58 / ATCC 33970)</name>
    <name type="common">Agrobacterium tumefaciens (strain C58)</name>
    <dbReference type="NCBI Taxonomy" id="176299"/>
    <lineage>
        <taxon>Bacteria</taxon>
        <taxon>Pseudomonadati</taxon>
        <taxon>Pseudomonadota</taxon>
        <taxon>Alphaproteobacteria</taxon>
        <taxon>Hyphomicrobiales</taxon>
        <taxon>Rhizobiaceae</taxon>
        <taxon>Rhizobium/Agrobacterium group</taxon>
        <taxon>Agrobacterium</taxon>
        <taxon>Agrobacterium tumefaciens complex</taxon>
    </lineage>
</organism>
<geneLocation type="plasmid">
    <name>pTiC58</name>
</geneLocation>
<accession>Q44349</accession>
<sequence>MAIAHFSASIVSRGDGRSVVLSAAYQHCAKMEYEREARTIDYTRKQGLVHQEFILPADAPKWVRALIADCSVAGASEAFWNKVEAFEKRSDAQLARDLTIALPRELTSEQNIALVRDFVEKHILGKGMVADWVYHDNPGNPHIHLMTTLRPLTEDGFGAKKVAVIGEDGQLVRTKSGKILYELWAGSTDDFNVVRDGWFERLNHHLTLGGIDLKIDGRSYEKQGIDLEPTIHLGVGAKAISRKAEQQGVRPELERIELNEERRSENTRRILKNPAIVLDLIMREKSVFDERDVAKVLHRYVDDPAVFQQLMLRIILNPEVLRLQRDTIEFATGEKVPARYSTRAMIRLEATMARQAMWLSDKETHAVSTAVLAATFGRHGRLSEEQKAAIECIAGPARIAAVVGRAGAGKTTMMKAAREAWELAGYRVVGGALAGKASEGLDKEAGIESRTLSSWELRWNRGRDVLDNKTVFVMDEAGMVASKQMAGFVDAVVRAGAKIVLVGDPEQLQPIEAGAAFRAIVDRIGYAELETIYRQREDWMRKASLDLARGNVEKALALYNANARIVGERLKAEAVERLIADWNRDYDQTKTTLILAHLRRDVRMLNVMAREKLVERGIVGEGHVFRTADGERRFHAGDQIVFLKNETLLGVKNGMIGHVVEAVPNRIVAVVGDRDHRRHVVVEQRFYSNLDHGYATTIHKSQGATVDRVKVLASLSLDRHLTYVAMTRHREDLQLYYGCRSFAFNGGLAKVLSRKNAKETTLDYERGKLYREALRFAENRGLHIMQVARTMLRDRLDWTLRQKTKVSDLVHRLRALGERLGLDQSPKTQTMKEAAPMVTGIKTFSGSVADTVGDKLGADPTLKQQWEEVSARFRYVFADPETAFRAVNFDTVLADKEAAKAVLQKLEAEPASIGALKGKTGILASKTEREARRVAEVNVPALKRDLEQYLRMRETATLRIVTEEQALRQRVSIDIPALSPAARVVLERVRDAIDRNDLPAALGYALSNRETKLEIDGFNQAVTERFGERTLLSNVAREPSGKLYEKLSDGMRPEQKEQLKQAWPIMRTAQQLAAHERTVQSLKQAEELRQTLRQAPVLKQ</sequence>
<feature type="chain" id="PRO_0000210853" description="Conjugal transfer protein TraA">
    <location>
        <begin position="1"/>
        <end position="1100"/>
    </location>
</feature>
<feature type="binding site" evidence="1">
    <location>
        <begin position="404"/>
        <end position="411"/>
    </location>
    <ligand>
        <name>ATP</name>
        <dbReference type="ChEBI" id="CHEBI:30616"/>
    </ligand>
</feature>
<feature type="sequence conflict" description="In Ref. 1; AAC17212." evidence="2" ref="1">
    <original>L</original>
    <variation>LL</variation>
    <location>
        <position position="372"/>
    </location>
</feature>
<dbReference type="EMBL" id="AF010180">
    <property type="protein sequence ID" value="AAC17212.1"/>
    <property type="molecule type" value="Genomic_DNA"/>
</dbReference>
<dbReference type="EMBL" id="AE007871">
    <property type="protein sequence ID" value="AAK91091.2"/>
    <property type="molecule type" value="Genomic_DNA"/>
</dbReference>
<dbReference type="PIR" id="AE3243">
    <property type="entry name" value="AE3243"/>
</dbReference>
<dbReference type="PIR" id="T03419">
    <property type="entry name" value="T03419"/>
</dbReference>
<dbReference type="RefSeq" id="NP_396650.2">
    <property type="nucleotide sequence ID" value="NC_003065.3"/>
</dbReference>
<dbReference type="RefSeq" id="WP_010974791.1">
    <property type="nucleotide sequence ID" value="NC_003065.3"/>
</dbReference>
<dbReference type="SMR" id="Q44349"/>
<dbReference type="EnsemblBacteria" id="AAK91091">
    <property type="protein sequence ID" value="AAK91091"/>
    <property type="gene ID" value="Atu6127"/>
</dbReference>
<dbReference type="GeneID" id="1137450"/>
<dbReference type="KEGG" id="atu:Atu6127"/>
<dbReference type="PATRIC" id="fig|176299.10.peg.5334"/>
<dbReference type="HOGENOM" id="CLU_006069_1_0_5"/>
<dbReference type="OrthoDB" id="1826980at2"/>
<dbReference type="PhylomeDB" id="Q44349"/>
<dbReference type="BioCyc" id="AGRO:ATU6127-MONOMER"/>
<dbReference type="Proteomes" id="UP000000813">
    <property type="component" value="Plasmid Ti"/>
</dbReference>
<dbReference type="GO" id="GO:0005524">
    <property type="term" value="F:ATP binding"/>
    <property type="evidence" value="ECO:0007669"/>
    <property type="project" value="UniProtKB-KW"/>
</dbReference>
<dbReference type="GO" id="GO:0003678">
    <property type="term" value="F:DNA helicase activity"/>
    <property type="evidence" value="ECO:0007669"/>
    <property type="project" value="UniProtKB-ARBA"/>
</dbReference>
<dbReference type="CDD" id="cd17933">
    <property type="entry name" value="DEXSc_RecD-like"/>
    <property type="match status" value="1"/>
</dbReference>
<dbReference type="CDD" id="cd18809">
    <property type="entry name" value="SF1_C_RecD"/>
    <property type="match status" value="1"/>
</dbReference>
<dbReference type="Gene3D" id="2.30.30.940">
    <property type="match status" value="1"/>
</dbReference>
<dbReference type="Gene3D" id="3.30.930.30">
    <property type="match status" value="1"/>
</dbReference>
<dbReference type="Gene3D" id="3.40.50.300">
    <property type="entry name" value="P-loop containing nucleotide triphosphate hydrolases"/>
    <property type="match status" value="2"/>
</dbReference>
<dbReference type="InterPro" id="IPR027351">
    <property type="entry name" value="(+)RNA_virus_helicase_core_dom"/>
</dbReference>
<dbReference type="InterPro" id="IPR041533">
    <property type="entry name" value="Bep_BID"/>
</dbReference>
<dbReference type="InterPro" id="IPR050534">
    <property type="entry name" value="Coronavir_polyprotein_1ab"/>
</dbReference>
<dbReference type="InterPro" id="IPR005053">
    <property type="entry name" value="MobA_MobL"/>
</dbReference>
<dbReference type="InterPro" id="IPR027417">
    <property type="entry name" value="P-loop_NTPase"/>
</dbReference>
<dbReference type="InterPro" id="IPR014136">
    <property type="entry name" value="TraA_Ti"/>
</dbReference>
<dbReference type="NCBIfam" id="NF010402">
    <property type="entry name" value="PRK13826.1"/>
    <property type="match status" value="1"/>
</dbReference>
<dbReference type="NCBIfam" id="TIGR02768">
    <property type="entry name" value="TraA_Ti"/>
    <property type="match status" value="1"/>
</dbReference>
<dbReference type="PANTHER" id="PTHR43788:SF6">
    <property type="entry name" value="DNA HELICASE B"/>
    <property type="match status" value="1"/>
</dbReference>
<dbReference type="PANTHER" id="PTHR43788">
    <property type="entry name" value="DNA2/NAM7 HELICASE FAMILY MEMBER"/>
    <property type="match status" value="1"/>
</dbReference>
<dbReference type="Pfam" id="PF13604">
    <property type="entry name" value="AAA_30"/>
    <property type="match status" value="1"/>
</dbReference>
<dbReference type="Pfam" id="PF17841">
    <property type="entry name" value="Bep_C_terminal"/>
    <property type="match status" value="1"/>
</dbReference>
<dbReference type="Pfam" id="PF03389">
    <property type="entry name" value="MobA_MobL"/>
    <property type="match status" value="1"/>
</dbReference>
<dbReference type="Pfam" id="PF01443">
    <property type="entry name" value="Viral_helicase1"/>
    <property type="match status" value="1"/>
</dbReference>
<dbReference type="SUPFAM" id="SSF52540">
    <property type="entry name" value="P-loop containing nucleoside triphosphate hydrolases"/>
    <property type="match status" value="2"/>
</dbReference>
<keyword id="KW-0067">ATP-binding</keyword>
<keyword id="KW-0184">Conjugation</keyword>
<keyword id="KW-0547">Nucleotide-binding</keyword>
<keyword id="KW-0614">Plasmid</keyword>
<keyword id="KW-1185">Reference proteome</keyword>
<comment type="similarity">
    <text evidence="2">Belongs to the MobA/MobL family.</text>
</comment>
<reference key="1">
    <citation type="journal article" date="1996" name="J. Bacteriol.">
        <title>The tra region of the nopaline-type Ti plasmid is a chimera with elements related to the transfer systems of RSF1010, RP4, and F.</title>
        <authorList>
            <person name="Farrand S.K."/>
            <person name="Hwang I."/>
            <person name="Cook D.M."/>
        </authorList>
    </citation>
    <scope>NUCLEOTIDE SEQUENCE [GENOMIC DNA]</scope>
</reference>
<reference key="2">
    <citation type="journal article" date="2001" name="Science">
        <title>The genome of the natural genetic engineer Agrobacterium tumefaciens C58.</title>
        <authorList>
            <person name="Wood D.W."/>
            <person name="Setubal J.C."/>
            <person name="Kaul R."/>
            <person name="Monks D.E."/>
            <person name="Kitajima J.P."/>
            <person name="Okura V.K."/>
            <person name="Zhou Y."/>
            <person name="Chen L."/>
            <person name="Wood G.E."/>
            <person name="Almeida N.F. Jr."/>
            <person name="Woo L."/>
            <person name="Chen Y."/>
            <person name="Paulsen I.T."/>
            <person name="Eisen J.A."/>
            <person name="Karp P.D."/>
            <person name="Bovee D. Sr."/>
            <person name="Chapman P."/>
            <person name="Clendenning J."/>
            <person name="Deatherage G."/>
            <person name="Gillet W."/>
            <person name="Grant C."/>
            <person name="Kutyavin T."/>
            <person name="Levy R."/>
            <person name="Li M.-J."/>
            <person name="McClelland E."/>
            <person name="Palmieri A."/>
            <person name="Raymond C."/>
            <person name="Rouse G."/>
            <person name="Saenphimmachak C."/>
            <person name="Wu Z."/>
            <person name="Romero P."/>
            <person name="Gordon D."/>
            <person name="Zhang S."/>
            <person name="Yoo H."/>
            <person name="Tao Y."/>
            <person name="Biddle P."/>
            <person name="Jung M."/>
            <person name="Krespan W."/>
            <person name="Perry M."/>
            <person name="Gordon-Kamm B."/>
            <person name="Liao L."/>
            <person name="Kim S."/>
            <person name="Hendrick C."/>
            <person name="Zhao Z.-Y."/>
            <person name="Dolan M."/>
            <person name="Chumley F."/>
            <person name="Tingey S.V."/>
            <person name="Tomb J.-F."/>
            <person name="Gordon M.P."/>
            <person name="Olson M.V."/>
            <person name="Nester E.W."/>
        </authorList>
    </citation>
    <scope>NUCLEOTIDE SEQUENCE [LARGE SCALE GENOMIC DNA]</scope>
</reference>
<reference key="3">
    <citation type="journal article" date="2001" name="Science">
        <title>Genome sequence of the plant pathogen and biotechnology agent Agrobacterium tumefaciens C58.</title>
        <authorList>
            <person name="Goodner B."/>
            <person name="Hinkle G."/>
            <person name="Gattung S."/>
            <person name="Miller N."/>
            <person name="Blanchard M."/>
            <person name="Qurollo B."/>
            <person name="Goldman B.S."/>
            <person name="Cao Y."/>
            <person name="Askenazi M."/>
            <person name="Halling C."/>
            <person name="Mullin L."/>
            <person name="Houmiel K."/>
            <person name="Gordon J."/>
            <person name="Vaudin M."/>
            <person name="Iartchouk O."/>
            <person name="Epp A."/>
            <person name="Liu F."/>
            <person name="Wollam C."/>
            <person name="Allinger M."/>
            <person name="Doughty D."/>
            <person name="Scott C."/>
            <person name="Lappas C."/>
            <person name="Markelz B."/>
            <person name="Flanagan C."/>
            <person name="Crowell C."/>
            <person name="Gurson J."/>
            <person name="Lomo C."/>
            <person name="Sear C."/>
            <person name="Strub G."/>
            <person name="Cielo C."/>
            <person name="Slater S."/>
        </authorList>
    </citation>
    <scope>NUCLEOTIDE SEQUENCE [LARGE SCALE GENOMIC DNA]</scope>
    <source>
        <strain>C58 / ATCC 33970</strain>
    </source>
</reference>